<evidence type="ECO:0000250" key="1">
    <source>
        <dbReference type="UniProtKB" id="P80324"/>
    </source>
</evidence>
<evidence type="ECO:0000255" key="2"/>
<evidence type="ECO:0000269" key="3">
    <source>
    </source>
</evidence>
<evidence type="ECO:0000269" key="4">
    <source>
    </source>
</evidence>
<evidence type="ECO:0000303" key="5">
    <source>
    </source>
</evidence>
<evidence type="ECO:0000305" key="6"/>
<evidence type="ECO:0000312" key="7">
    <source>
        <dbReference type="EMBL" id="BAB12222.1"/>
    </source>
</evidence>
<proteinExistence type="evidence at protein level"/>
<gene>
    <name evidence="5" type="primary">DAO1</name>
</gene>
<accession>Q9HGY3</accession>
<keyword id="KW-0903">Direct protein sequencing</keyword>
<keyword id="KW-0274">FAD</keyword>
<keyword id="KW-0285">Flavoprotein</keyword>
<keyword id="KW-0560">Oxidoreductase</keyword>
<keyword id="KW-0576">Peroxisome</keyword>
<feature type="chain" id="PRO_0000460037" description="D-amino-acid oxidase">
    <location>
        <begin position="1"/>
        <end position="345"/>
    </location>
</feature>
<feature type="short sequence motif" description="Microbody targeting signal" evidence="2">
    <location>
        <begin position="343"/>
        <end position="345"/>
    </location>
</feature>
<feature type="binding site" evidence="1">
    <location>
        <position position="10"/>
    </location>
    <ligand>
        <name>FAD</name>
        <dbReference type="ChEBI" id="CHEBI:57692"/>
    </ligand>
</feature>
<feature type="binding site" evidence="1">
    <location>
        <position position="13"/>
    </location>
    <ligand>
        <name>FAD</name>
        <dbReference type="ChEBI" id="CHEBI:57692"/>
    </ligand>
</feature>
<feature type="binding site" evidence="1">
    <location>
        <position position="49"/>
    </location>
    <ligand>
        <name>FAD</name>
        <dbReference type="ChEBI" id="CHEBI:57692"/>
    </ligand>
</feature>
<feature type="binding site" evidence="1">
    <location>
        <position position="53"/>
    </location>
    <ligand>
        <name>FAD</name>
        <dbReference type="ChEBI" id="CHEBI:57692"/>
    </ligand>
</feature>
<feature type="binding site" evidence="1">
    <location>
        <position position="55"/>
    </location>
    <ligand>
        <name>FAD</name>
        <dbReference type="ChEBI" id="CHEBI:57692"/>
    </ligand>
</feature>
<feature type="binding site" evidence="1">
    <location>
        <position position="230"/>
    </location>
    <ligand>
        <name>(R)-lactate</name>
        <dbReference type="ChEBI" id="CHEBI:16004"/>
    </ligand>
</feature>
<feature type="binding site" evidence="1">
    <location>
        <position position="230"/>
    </location>
    <ligand>
        <name>anthranilate</name>
        <dbReference type="ChEBI" id="CHEBI:16567"/>
        <label>1</label>
    </ligand>
</feature>
<feature type="binding site" evidence="1">
    <location>
        <position position="290"/>
    </location>
    <ligand>
        <name>(R)-lactate</name>
        <dbReference type="ChEBI" id="CHEBI:16004"/>
    </ligand>
</feature>
<feature type="binding site" evidence="1">
    <location>
        <position position="290"/>
    </location>
    <ligand>
        <name>anthranilate</name>
        <dbReference type="ChEBI" id="CHEBI:16567"/>
        <label>1</label>
    </ligand>
</feature>
<feature type="binding site" evidence="1">
    <location>
        <position position="290"/>
    </location>
    <ligand>
        <name>FAD</name>
        <dbReference type="ChEBI" id="CHEBI:57692"/>
    </ligand>
</feature>
<feature type="binding site" evidence="1">
    <location>
        <position position="317"/>
    </location>
    <ligand>
        <name>FAD</name>
        <dbReference type="ChEBI" id="CHEBI:57692"/>
    </ligand>
</feature>
<feature type="binding site" evidence="1">
    <location>
        <position position="320"/>
    </location>
    <ligand>
        <name>FAD</name>
        <dbReference type="ChEBI" id="CHEBI:57692"/>
    </ligand>
</feature>
<feature type="binding site" evidence="1">
    <location>
        <position position="321"/>
    </location>
    <ligand>
        <name>FAD</name>
        <dbReference type="ChEBI" id="CHEBI:57692"/>
    </ligand>
</feature>
<feature type="binding site" evidence="1">
    <location>
        <position position="322"/>
    </location>
    <ligand>
        <name>FAD</name>
        <dbReference type="ChEBI" id="CHEBI:57692"/>
    </ligand>
</feature>
<feature type="mutagenesis site" description="Decreases growth when D-alanine is used as a carbon source." evidence="3">
    <location>
        <begin position="343"/>
        <end position="345"/>
    </location>
</feature>
<dbReference type="EC" id="1.4.3.3" evidence="4"/>
<dbReference type="EMBL" id="AB042032">
    <property type="protein sequence ID" value="BAB12222.1"/>
    <property type="molecule type" value="Genomic_DNA"/>
</dbReference>
<dbReference type="SMR" id="Q9HGY3"/>
<dbReference type="BRENDA" id="1.4.3.3">
    <property type="organism ID" value="1100"/>
</dbReference>
<dbReference type="GO" id="GO:0005782">
    <property type="term" value="C:peroxisomal matrix"/>
    <property type="evidence" value="ECO:0000314"/>
    <property type="project" value="UniProtKB"/>
</dbReference>
<dbReference type="GO" id="GO:0003884">
    <property type="term" value="F:D-amino-acid oxidase activity"/>
    <property type="evidence" value="ECO:0000314"/>
    <property type="project" value="UniProtKB"/>
</dbReference>
<dbReference type="GO" id="GO:0071949">
    <property type="term" value="F:FAD binding"/>
    <property type="evidence" value="ECO:0007669"/>
    <property type="project" value="InterPro"/>
</dbReference>
<dbReference type="GO" id="GO:0019478">
    <property type="term" value="P:D-amino acid catabolic process"/>
    <property type="evidence" value="ECO:0000314"/>
    <property type="project" value="UniProtKB"/>
</dbReference>
<dbReference type="GO" id="GO:0019740">
    <property type="term" value="P:nitrogen utilization"/>
    <property type="evidence" value="ECO:0000315"/>
    <property type="project" value="UniProtKB"/>
</dbReference>
<dbReference type="Gene3D" id="3.30.9.10">
    <property type="entry name" value="D-Amino Acid Oxidase, subunit A, domain 2"/>
    <property type="match status" value="1"/>
</dbReference>
<dbReference type="Gene3D" id="3.40.50.720">
    <property type="entry name" value="NAD(P)-binding Rossmann-like Domain"/>
    <property type="match status" value="1"/>
</dbReference>
<dbReference type="InterPro" id="IPR023209">
    <property type="entry name" value="DAO"/>
</dbReference>
<dbReference type="InterPro" id="IPR006076">
    <property type="entry name" value="FAD-dep_OxRdtase"/>
</dbReference>
<dbReference type="PANTHER" id="PTHR11530">
    <property type="entry name" value="D-AMINO ACID OXIDASE"/>
    <property type="match status" value="1"/>
</dbReference>
<dbReference type="PANTHER" id="PTHR11530:SF11">
    <property type="entry name" value="D-ASPARTATE OXIDASE"/>
    <property type="match status" value="1"/>
</dbReference>
<dbReference type="Pfam" id="PF01266">
    <property type="entry name" value="DAO"/>
    <property type="match status" value="1"/>
</dbReference>
<dbReference type="PIRSF" id="PIRSF000189">
    <property type="entry name" value="D-aa_oxidase"/>
    <property type="match status" value="1"/>
</dbReference>
<dbReference type="SUPFAM" id="SSF54373">
    <property type="entry name" value="FAD-linked reductases, C-terminal domain"/>
    <property type="match status" value="1"/>
</dbReference>
<dbReference type="SUPFAM" id="SSF51971">
    <property type="entry name" value="Nucleotide-binding domain"/>
    <property type="match status" value="1"/>
</dbReference>
<comment type="function">
    <text evidence="3 4">Catalyzes the oxidative deamination of D-amino acids with broad substrate specificity (PubMed:11330678). Enables the organism to utilize D-amino acids as a source of nutrients (PubMed:10992285). Enables the organism to utilize D-alanine as a nitrogen source, although it is not strictly required for this process (PubMed:10992285). Also enables utilization of D-alanine as a carbon source (PubMed:10992285).</text>
</comment>
<comment type="catalytic activity">
    <reaction evidence="4">
        <text>a D-alpha-amino acid + O2 + H2O = a 2-oxocarboxylate + H2O2 + NH4(+)</text>
        <dbReference type="Rhea" id="RHEA:21816"/>
        <dbReference type="ChEBI" id="CHEBI:15377"/>
        <dbReference type="ChEBI" id="CHEBI:15379"/>
        <dbReference type="ChEBI" id="CHEBI:16240"/>
        <dbReference type="ChEBI" id="CHEBI:28938"/>
        <dbReference type="ChEBI" id="CHEBI:35179"/>
        <dbReference type="ChEBI" id="CHEBI:59871"/>
        <dbReference type="EC" id="1.4.3.3"/>
    </reaction>
    <physiologicalReaction direction="left-to-right" evidence="4">
        <dbReference type="Rhea" id="RHEA:21817"/>
    </physiologicalReaction>
</comment>
<comment type="catalytic activity">
    <reaction evidence="4">
        <text>D-methionine + O2 + H2O = 4-methylsulfanyl-2-oxobutanoate + H2O2 + NH4(+)</text>
        <dbReference type="Rhea" id="RHEA:78207"/>
        <dbReference type="ChEBI" id="CHEBI:15377"/>
        <dbReference type="ChEBI" id="CHEBI:15379"/>
        <dbReference type="ChEBI" id="CHEBI:16240"/>
        <dbReference type="ChEBI" id="CHEBI:16723"/>
        <dbReference type="ChEBI" id="CHEBI:28938"/>
        <dbReference type="ChEBI" id="CHEBI:57932"/>
    </reaction>
    <physiologicalReaction direction="left-to-right" evidence="4">
        <dbReference type="Rhea" id="RHEA:78208"/>
    </physiologicalReaction>
</comment>
<comment type="cofactor">
    <cofactor evidence="4">
        <name>FAD</name>
        <dbReference type="ChEBI" id="CHEBI:57692"/>
    </cofactor>
</comment>
<comment type="biophysicochemical properties">
    <kinetics>
        <KM evidence="4">4.28 mM for D-alanine (at 30 degrees Celsius and at pH 8)</KM>
        <KM evidence="4">33.7 mM for D-serine (at 30 degrees Celsius and at pH 8)</KM>
        <KM evidence="4">27.4 mM for D-methionine (at 30 degrees Celsius and at pH 8)</KM>
        <KM evidence="4">3.95 mM for D-valine (at 30 degrees Celsius and at pH 8)</KM>
        <KM evidence="4">10.9 mM for D-leucine (at 30 degrees Celsius and at pH 8)</KM>
    </kinetics>
    <phDependence>
        <text evidence="4">Optimum pH is 8.4.</text>
    </phDependence>
    <temperatureDependence>
        <text evidence="4">Optimum temperature is 50 degrees Celsius.</text>
    </temperatureDependence>
</comment>
<comment type="subcellular location">
    <subcellularLocation>
        <location evidence="3 4">Peroxisome matrix</location>
    </subcellularLocation>
</comment>
<comment type="disruption phenotype">
    <text evidence="3">No growth when D-alanine is used as a carbon source, and decreases growth when D-alanine is used as a nitrogen source.</text>
</comment>
<comment type="similarity">
    <text evidence="6">Belongs to the DAMOX/DASOX family.</text>
</comment>
<name>OXDA_CANBO</name>
<sequence length="345" mass="38340">MGDQIVVLGSGIIGLYTTYCLIYEAGCAPAKITIVAEFLPGDQSTLYTSPWAGGNFSCISPADDTTLAYDKFTYLNLFKIHKKLGGPECGLDNKPSTEYWDFYPGDEKVNSLKQYLKDFKVIPKSELPEGVEYGISYTTWNFNCPVFLQNMANFLNKRNVTIIRKHLTHISQAYLTVNTKVVFNCTGIGAADLGGVKDEKVYPTRGQVVVVRAPHIQENKMRWGKDYATYIIPRPYSNGELVLGGFLQKDNWTGNTFGFETDDIVSRTTSLLPKILDEPLHIIRVAAGLRPSRHGGPRIEAEVCEEGKLTIHNYGASGYGYQAGYGMSYEAVKLLVDNQKVKAKL</sequence>
<organism evidence="7">
    <name type="scientific">Candida boidinii</name>
    <name type="common">Yeast</name>
    <dbReference type="NCBI Taxonomy" id="5477"/>
    <lineage>
        <taxon>Eukaryota</taxon>
        <taxon>Fungi</taxon>
        <taxon>Dikarya</taxon>
        <taxon>Ascomycota</taxon>
        <taxon>Saccharomycotina</taxon>
        <taxon>Pichiomycetes</taxon>
        <taxon>Pichiales</taxon>
        <taxon>Pichiaceae</taxon>
        <taxon>Ogataea</taxon>
        <taxon>Ogataea/Candida clade</taxon>
    </lineage>
</organism>
<reference evidence="7" key="1">
    <citation type="journal article" date="2000" name="Yeast">
        <title>Physiological role of the D-amino acid oxidase gene, DAO1, in carbon and nitrogen metabolism in the methylotrophic yeast Candida boidinii.</title>
        <authorList>
            <person name="Yurimoto H."/>
            <person name="Hasegawa T."/>
            <person name="Sakai Y."/>
            <person name="Kato N."/>
        </authorList>
    </citation>
    <scope>NUCLEOTIDE SEQUENCE [GENOMIC DNA]</scope>
    <scope>FUNCTION</scope>
    <scope>SUBCELLULAR LOCATION</scope>
    <scope>DISRUPTION PHENOTYPE</scope>
    <scope>MUTAGENESIS OF 343-ALA--LEU-345</scope>
</reference>
<reference evidence="6" key="2">
    <citation type="journal article" date="2001" name="Biosci. Biotechnol. Biochem.">
        <title>Characterization and high-level production of D-amino acid oxidase in Candida boidinii.</title>
        <authorList>
            <person name="Yurimoto H."/>
            <person name="Hasegawa T."/>
            <person name="Sakai Y."/>
            <person name="Kato N."/>
        </authorList>
    </citation>
    <scope>PROTEIN SEQUENCE OF 2-18</scope>
    <scope>FUNCTION</scope>
    <scope>CATALYTIC ACTIVITY</scope>
    <scope>COFACTOR</scope>
    <scope>BIOPHYSICOCHEMICAL PROPERTIES</scope>
    <scope>SUBCELLULAR LOCATION</scope>
</reference>
<protein>
    <recommendedName>
        <fullName evidence="5">D-amino-acid oxidase</fullName>
        <shortName evidence="6">DAAO</shortName>
        <shortName evidence="6">DAMOX</shortName>
        <shortName evidence="6">DAO</shortName>
        <ecNumber evidence="4">1.4.3.3</ecNumber>
    </recommendedName>
</protein>